<sequence>MEFHYVAQADLELLTSSNPPASASQSTGITGGSHRARPGPVHFIDKVTDKPSHSHPFALKENWNLNPEPSSPPSPLFLEAPSRQASQHHGASPGAGTSAGCPFEKCCSTEPCLSGLGDVGRGEAASLRARPGSGASRGQGPGSRVSCRRDLGKPLHAPAGFSAGEVHTTPLGNLGA</sequence>
<reference key="1">
    <citation type="journal article" date="2000" name="Proc. Natl. Acad. Sci. U.S.A.">
        <title>Gene expression profiling in the human hypothalamus-pituitary-adrenal axis and full-length cDNA cloning.</title>
        <authorList>
            <person name="Hu R.-M."/>
            <person name="Han Z.-G."/>
            <person name="Song H.-D."/>
            <person name="Peng Y.-D."/>
            <person name="Huang Q.-H."/>
            <person name="Ren S.-X."/>
            <person name="Gu Y.-J."/>
            <person name="Huang C.-H."/>
            <person name="Li Y.-B."/>
            <person name="Jiang C.-L."/>
            <person name="Fu G."/>
            <person name="Zhang Q.-H."/>
            <person name="Gu B.-W."/>
            <person name="Dai M."/>
            <person name="Mao Y.-F."/>
            <person name="Gao G.-F."/>
            <person name="Rong R."/>
            <person name="Ye M."/>
            <person name="Zhou J."/>
            <person name="Xu S.-H."/>
            <person name="Gu J."/>
            <person name="Shi J.-X."/>
            <person name="Jin W.-R."/>
            <person name="Zhang C.-K."/>
            <person name="Wu T.-M."/>
            <person name="Huang G.-Y."/>
            <person name="Chen Z."/>
            <person name="Chen M.-D."/>
            <person name="Chen J.-L."/>
        </authorList>
    </citation>
    <scope>NUCLEOTIDE SEQUENCE [LARGE SCALE MRNA]</scope>
    <source>
        <tissue>Adrenal gland</tissue>
    </source>
</reference>
<reference key="2">
    <citation type="journal article" date="2004" name="Nature">
        <title>DNA sequence and analysis of human chromosome 9.</title>
        <authorList>
            <person name="Humphray S.J."/>
            <person name="Oliver K."/>
            <person name="Hunt A.R."/>
            <person name="Plumb R.W."/>
            <person name="Loveland J.E."/>
            <person name="Howe K.L."/>
            <person name="Andrews T.D."/>
            <person name="Searle S."/>
            <person name="Hunt S.E."/>
            <person name="Scott C.E."/>
            <person name="Jones M.C."/>
            <person name="Ainscough R."/>
            <person name="Almeida J.P."/>
            <person name="Ambrose K.D."/>
            <person name="Ashwell R.I.S."/>
            <person name="Babbage A.K."/>
            <person name="Babbage S."/>
            <person name="Bagguley C.L."/>
            <person name="Bailey J."/>
            <person name="Banerjee R."/>
            <person name="Barker D.J."/>
            <person name="Barlow K.F."/>
            <person name="Bates K."/>
            <person name="Beasley H."/>
            <person name="Beasley O."/>
            <person name="Bird C.P."/>
            <person name="Bray-Allen S."/>
            <person name="Brown A.J."/>
            <person name="Brown J.Y."/>
            <person name="Burford D."/>
            <person name="Burrill W."/>
            <person name="Burton J."/>
            <person name="Carder C."/>
            <person name="Carter N.P."/>
            <person name="Chapman J.C."/>
            <person name="Chen Y."/>
            <person name="Clarke G."/>
            <person name="Clark S.Y."/>
            <person name="Clee C.M."/>
            <person name="Clegg S."/>
            <person name="Collier R.E."/>
            <person name="Corby N."/>
            <person name="Crosier M."/>
            <person name="Cummings A.T."/>
            <person name="Davies J."/>
            <person name="Dhami P."/>
            <person name="Dunn M."/>
            <person name="Dutta I."/>
            <person name="Dyer L.W."/>
            <person name="Earthrowl M.E."/>
            <person name="Faulkner L."/>
            <person name="Fleming C.J."/>
            <person name="Frankish A."/>
            <person name="Frankland J.A."/>
            <person name="French L."/>
            <person name="Fricker D.G."/>
            <person name="Garner P."/>
            <person name="Garnett J."/>
            <person name="Ghori J."/>
            <person name="Gilbert J.G.R."/>
            <person name="Glison C."/>
            <person name="Grafham D.V."/>
            <person name="Gribble S."/>
            <person name="Griffiths C."/>
            <person name="Griffiths-Jones S."/>
            <person name="Grocock R."/>
            <person name="Guy J."/>
            <person name="Hall R.E."/>
            <person name="Hammond S."/>
            <person name="Harley J.L."/>
            <person name="Harrison E.S.I."/>
            <person name="Hart E.A."/>
            <person name="Heath P.D."/>
            <person name="Henderson C.D."/>
            <person name="Hopkins B.L."/>
            <person name="Howard P.J."/>
            <person name="Howden P.J."/>
            <person name="Huckle E."/>
            <person name="Johnson C."/>
            <person name="Johnson D."/>
            <person name="Joy A.A."/>
            <person name="Kay M."/>
            <person name="Keenan S."/>
            <person name="Kershaw J.K."/>
            <person name="Kimberley A.M."/>
            <person name="King A."/>
            <person name="Knights A."/>
            <person name="Laird G.K."/>
            <person name="Langford C."/>
            <person name="Lawlor S."/>
            <person name="Leongamornlert D.A."/>
            <person name="Leversha M."/>
            <person name="Lloyd C."/>
            <person name="Lloyd D.M."/>
            <person name="Lovell J."/>
            <person name="Martin S."/>
            <person name="Mashreghi-Mohammadi M."/>
            <person name="Matthews L."/>
            <person name="McLaren S."/>
            <person name="McLay K.E."/>
            <person name="McMurray A."/>
            <person name="Milne S."/>
            <person name="Nickerson T."/>
            <person name="Nisbett J."/>
            <person name="Nordsiek G."/>
            <person name="Pearce A.V."/>
            <person name="Peck A.I."/>
            <person name="Porter K.M."/>
            <person name="Pandian R."/>
            <person name="Pelan S."/>
            <person name="Phillimore B."/>
            <person name="Povey S."/>
            <person name="Ramsey Y."/>
            <person name="Rand V."/>
            <person name="Scharfe M."/>
            <person name="Sehra H.K."/>
            <person name="Shownkeen R."/>
            <person name="Sims S.K."/>
            <person name="Skuce C.D."/>
            <person name="Smith M."/>
            <person name="Steward C.A."/>
            <person name="Swarbreck D."/>
            <person name="Sycamore N."/>
            <person name="Tester J."/>
            <person name="Thorpe A."/>
            <person name="Tracey A."/>
            <person name="Tromans A."/>
            <person name="Thomas D.W."/>
            <person name="Wall M."/>
            <person name="Wallis J.M."/>
            <person name="West A.P."/>
            <person name="Whitehead S.L."/>
            <person name="Willey D.L."/>
            <person name="Williams S.A."/>
            <person name="Wilming L."/>
            <person name="Wray P.W."/>
            <person name="Young L."/>
            <person name="Ashurst J.L."/>
            <person name="Coulson A."/>
            <person name="Blocker H."/>
            <person name="Durbin R.M."/>
            <person name="Sulston J.E."/>
            <person name="Hubbard T."/>
            <person name="Jackson M.J."/>
            <person name="Bentley D.R."/>
            <person name="Beck S."/>
            <person name="Rogers J."/>
            <person name="Dunham I."/>
        </authorList>
    </citation>
    <scope>NUCLEOTIDE SEQUENCE [LARGE SCALE GENOMIC DNA]</scope>
</reference>
<reference key="3">
    <citation type="journal article" date="2004" name="Genome Res.">
        <title>The status, quality, and expansion of the NIH full-length cDNA project: the Mammalian Gene Collection (MGC).</title>
        <authorList>
            <consortium name="The MGC Project Team"/>
        </authorList>
    </citation>
    <scope>NUCLEOTIDE SEQUENCE [LARGE SCALE MRNA]</scope>
    <source>
        <tissue>Brain</tissue>
        <tissue>Pancreas</tissue>
    </source>
</reference>
<gene>
    <name type="primary">ARRDC1-AS1</name>
    <name type="synonym">C9orf37</name>
    <name type="ORF">AD038</name>
</gene>
<keyword id="KW-1267">Proteomics identification</keyword>
<keyword id="KW-1185">Reference proteome</keyword>
<dbReference type="EMBL" id="AF267857">
    <property type="protein sequence ID" value="AAG44726.1"/>
    <property type="status" value="ALT_FRAME"/>
    <property type="molecule type" value="mRNA"/>
</dbReference>
<dbReference type="EMBL" id="AL365502">
    <property type="status" value="NOT_ANNOTATED_CDS"/>
    <property type="molecule type" value="Genomic_DNA"/>
</dbReference>
<dbReference type="EMBL" id="BC066646">
    <property type="protein sequence ID" value="AAH66646.1"/>
    <property type="molecule type" value="mRNA"/>
</dbReference>
<dbReference type="EMBL" id="BC117267">
    <property type="protein sequence ID" value="AAI17268.1"/>
    <property type="molecule type" value="mRNA"/>
</dbReference>
<dbReference type="BioGRID" id="124435">
    <property type="interactions" value="3"/>
</dbReference>
<dbReference type="IntAct" id="Q9H2J1">
    <property type="interactions" value="1"/>
</dbReference>
<dbReference type="GlyGen" id="Q9H2J1">
    <property type="glycosylation" value="1 site, 1 O-linked glycan (1 site)"/>
</dbReference>
<dbReference type="BioMuta" id="HGNC:23395"/>
<dbReference type="MassIVE" id="Q9H2J1"/>
<dbReference type="DNASU" id="85026"/>
<dbReference type="AGR" id="HGNC:23395"/>
<dbReference type="GeneCards" id="ARRDC1-AS1"/>
<dbReference type="HGNC" id="HGNC:23395">
    <property type="gene designation" value="ARRDC1-AS1"/>
</dbReference>
<dbReference type="neXtProt" id="NX_Q9H2J1"/>
<dbReference type="InParanoid" id="Q9H2J1"/>
<dbReference type="PAN-GO" id="Q9H2J1">
    <property type="GO annotations" value="0 GO annotations based on evolutionary models"/>
</dbReference>
<dbReference type="PhylomeDB" id="Q9H2J1"/>
<dbReference type="PathwayCommons" id="Q9H2J1"/>
<dbReference type="SignaLink" id="Q9H2J1"/>
<dbReference type="ChiTaRS" id="ARRDC1-AS1">
    <property type="organism name" value="human"/>
</dbReference>
<dbReference type="Pharos" id="Q9H2J1">
    <property type="development level" value="Tdark"/>
</dbReference>
<dbReference type="PRO" id="PR:Q9H2J1"/>
<dbReference type="Proteomes" id="UP000005640">
    <property type="component" value="Unplaced"/>
</dbReference>
<dbReference type="RNAct" id="Q9H2J1">
    <property type="molecule type" value="protein"/>
</dbReference>
<dbReference type="PRINTS" id="PR02045">
    <property type="entry name" value="F138DOMAIN"/>
</dbReference>
<accession>Q9H2J1</accession>
<accession>Q17RM5</accession>
<accession>Q5T368</accession>
<comment type="sequence caution" evidence="2">
    <conflict type="frameshift">
        <sequence resource="EMBL-CDS" id="AAG44726"/>
    </conflict>
</comment>
<name>CI037_HUMAN</name>
<proteinExistence type="evidence at protein level"/>
<feature type="chain" id="PRO_0000089680" description="Uncharacterized protein ARRDC1-AS1">
    <location>
        <begin position="1"/>
        <end position="176"/>
    </location>
</feature>
<feature type="region of interest" description="Disordered" evidence="1">
    <location>
        <begin position="15"/>
        <end position="100"/>
    </location>
</feature>
<feature type="region of interest" description="Disordered" evidence="1">
    <location>
        <begin position="125"/>
        <end position="176"/>
    </location>
</feature>
<feature type="compositionally biased region" description="Polar residues" evidence="1">
    <location>
        <begin position="15"/>
        <end position="28"/>
    </location>
</feature>
<feature type="compositionally biased region" description="Basic and acidic residues" evidence="1">
    <location>
        <begin position="43"/>
        <end position="52"/>
    </location>
</feature>
<protein>
    <recommendedName>
        <fullName>Uncharacterized protein ARRDC1-AS1</fullName>
    </recommendedName>
    <alternativeName>
        <fullName>ARRDC1 antisense RNA 1</fullName>
    </alternativeName>
    <alternativeName>
        <fullName>ARRDC1 antisense gene protein 1</fullName>
    </alternativeName>
</protein>
<organism>
    <name type="scientific">Homo sapiens</name>
    <name type="common">Human</name>
    <dbReference type="NCBI Taxonomy" id="9606"/>
    <lineage>
        <taxon>Eukaryota</taxon>
        <taxon>Metazoa</taxon>
        <taxon>Chordata</taxon>
        <taxon>Craniata</taxon>
        <taxon>Vertebrata</taxon>
        <taxon>Euteleostomi</taxon>
        <taxon>Mammalia</taxon>
        <taxon>Eutheria</taxon>
        <taxon>Euarchontoglires</taxon>
        <taxon>Primates</taxon>
        <taxon>Haplorrhini</taxon>
        <taxon>Catarrhini</taxon>
        <taxon>Hominidae</taxon>
        <taxon>Homo</taxon>
    </lineage>
</organism>
<evidence type="ECO:0000256" key="1">
    <source>
        <dbReference type="SAM" id="MobiDB-lite"/>
    </source>
</evidence>
<evidence type="ECO:0000305" key="2"/>